<proteinExistence type="inferred from homology"/>
<accession>P0ADZ2</accession>
<accession>P02424</accession>
<name>RL23_ECO57</name>
<gene>
    <name evidence="1" type="primary">rplW</name>
    <name type="ordered locus">Z4689</name>
    <name type="ordered locus">ECs4183</name>
</gene>
<protein>
    <recommendedName>
        <fullName evidence="1">Large ribosomal subunit protein uL23</fullName>
    </recommendedName>
    <alternativeName>
        <fullName evidence="2">50S ribosomal protein L23</fullName>
    </alternativeName>
</protein>
<evidence type="ECO:0000255" key="1">
    <source>
        <dbReference type="HAMAP-Rule" id="MF_01369"/>
    </source>
</evidence>
<evidence type="ECO:0000305" key="2"/>
<reference key="1">
    <citation type="journal article" date="2001" name="Nature">
        <title>Genome sequence of enterohaemorrhagic Escherichia coli O157:H7.</title>
        <authorList>
            <person name="Perna N.T."/>
            <person name="Plunkett G. III"/>
            <person name="Burland V."/>
            <person name="Mau B."/>
            <person name="Glasner J.D."/>
            <person name="Rose D.J."/>
            <person name="Mayhew G.F."/>
            <person name="Evans P.S."/>
            <person name="Gregor J."/>
            <person name="Kirkpatrick H.A."/>
            <person name="Posfai G."/>
            <person name="Hackett J."/>
            <person name="Klink S."/>
            <person name="Boutin A."/>
            <person name="Shao Y."/>
            <person name="Miller L."/>
            <person name="Grotbeck E.J."/>
            <person name="Davis N.W."/>
            <person name="Lim A."/>
            <person name="Dimalanta E.T."/>
            <person name="Potamousis K."/>
            <person name="Apodaca J."/>
            <person name="Anantharaman T.S."/>
            <person name="Lin J."/>
            <person name="Yen G."/>
            <person name="Schwartz D.C."/>
            <person name="Welch R.A."/>
            <person name="Blattner F.R."/>
        </authorList>
    </citation>
    <scope>NUCLEOTIDE SEQUENCE [LARGE SCALE GENOMIC DNA]</scope>
    <source>
        <strain>O157:H7 / EDL933 / ATCC 700927 / EHEC</strain>
    </source>
</reference>
<reference key="2">
    <citation type="journal article" date="2001" name="DNA Res.">
        <title>Complete genome sequence of enterohemorrhagic Escherichia coli O157:H7 and genomic comparison with a laboratory strain K-12.</title>
        <authorList>
            <person name="Hayashi T."/>
            <person name="Makino K."/>
            <person name="Ohnishi M."/>
            <person name="Kurokawa K."/>
            <person name="Ishii K."/>
            <person name="Yokoyama K."/>
            <person name="Han C.-G."/>
            <person name="Ohtsubo E."/>
            <person name="Nakayama K."/>
            <person name="Murata T."/>
            <person name="Tanaka M."/>
            <person name="Tobe T."/>
            <person name="Iida T."/>
            <person name="Takami H."/>
            <person name="Honda T."/>
            <person name="Sasakawa C."/>
            <person name="Ogasawara N."/>
            <person name="Yasunaga T."/>
            <person name="Kuhara S."/>
            <person name="Shiba T."/>
            <person name="Hattori M."/>
            <person name="Shinagawa H."/>
        </authorList>
    </citation>
    <scope>NUCLEOTIDE SEQUENCE [LARGE SCALE GENOMIC DNA]</scope>
    <source>
        <strain>O157:H7 / Sakai / RIMD 0509952 / EHEC</strain>
    </source>
</reference>
<sequence>MIREERLLKVLRAPHVSEKASTAMEKSNTIVLKVAKDATKAEIKAAVQKLFEVEVEVVNTLVVKGKVKRHGQRIGRRSDWKKAYVTLKEGQNLDFVGGAE</sequence>
<comment type="function">
    <text evidence="1">One of the early assembly proteins it binds 23S rRNA. One of the proteins that surrounds the polypeptide exit tunnel on the outside of the ribosome. Forms the main docking site for trigger factor binding to the ribosome.</text>
</comment>
<comment type="subunit">
    <text evidence="1">Part of the 50S ribosomal subunit. Contacts protein L29, and trigger factor when it is bound to the ribosome.</text>
</comment>
<comment type="similarity">
    <text evidence="1">Belongs to the universal ribosomal protein uL23 family.</text>
</comment>
<keyword id="KW-1185">Reference proteome</keyword>
<keyword id="KW-0687">Ribonucleoprotein</keyword>
<keyword id="KW-0689">Ribosomal protein</keyword>
<keyword id="KW-0694">RNA-binding</keyword>
<keyword id="KW-0699">rRNA-binding</keyword>
<dbReference type="EMBL" id="AE005174">
    <property type="protein sequence ID" value="AAG58439.1"/>
    <property type="molecule type" value="Genomic_DNA"/>
</dbReference>
<dbReference type="EMBL" id="BA000007">
    <property type="protein sequence ID" value="BAB37606.1"/>
    <property type="molecule type" value="Genomic_DNA"/>
</dbReference>
<dbReference type="PIR" id="C85997">
    <property type="entry name" value="C85997"/>
</dbReference>
<dbReference type="PIR" id="G91151">
    <property type="entry name" value="G91151"/>
</dbReference>
<dbReference type="RefSeq" id="NP_312210.1">
    <property type="nucleotide sequence ID" value="NC_002695.1"/>
</dbReference>
<dbReference type="RefSeq" id="WP_000617544.1">
    <property type="nucleotide sequence ID" value="NZ_VOAI01000041.1"/>
</dbReference>
<dbReference type="EMDB" id="EMD-4319"/>
<dbReference type="EMDB" id="EMD-8826"/>
<dbReference type="EMDB" id="EMD-8829"/>
<dbReference type="SMR" id="P0ADZ2"/>
<dbReference type="STRING" id="155864.Z4689"/>
<dbReference type="GeneID" id="915965"/>
<dbReference type="GeneID" id="93778669"/>
<dbReference type="KEGG" id="ece:Z4689"/>
<dbReference type="KEGG" id="ecs:ECs_4183"/>
<dbReference type="PATRIC" id="fig|386585.9.peg.4366"/>
<dbReference type="eggNOG" id="COG0089">
    <property type="taxonomic scope" value="Bacteria"/>
</dbReference>
<dbReference type="HOGENOM" id="CLU_037562_3_1_6"/>
<dbReference type="OMA" id="DHRAAKP"/>
<dbReference type="Proteomes" id="UP000000558">
    <property type="component" value="Chromosome"/>
</dbReference>
<dbReference type="Proteomes" id="UP000002519">
    <property type="component" value="Chromosome"/>
</dbReference>
<dbReference type="GO" id="GO:1990904">
    <property type="term" value="C:ribonucleoprotein complex"/>
    <property type="evidence" value="ECO:0007669"/>
    <property type="project" value="UniProtKB-KW"/>
</dbReference>
<dbReference type="GO" id="GO:0005840">
    <property type="term" value="C:ribosome"/>
    <property type="evidence" value="ECO:0007669"/>
    <property type="project" value="UniProtKB-KW"/>
</dbReference>
<dbReference type="GO" id="GO:0019843">
    <property type="term" value="F:rRNA binding"/>
    <property type="evidence" value="ECO:0007669"/>
    <property type="project" value="UniProtKB-UniRule"/>
</dbReference>
<dbReference type="GO" id="GO:0003735">
    <property type="term" value="F:structural constituent of ribosome"/>
    <property type="evidence" value="ECO:0007669"/>
    <property type="project" value="InterPro"/>
</dbReference>
<dbReference type="GO" id="GO:0006412">
    <property type="term" value="P:translation"/>
    <property type="evidence" value="ECO:0007669"/>
    <property type="project" value="UniProtKB-UniRule"/>
</dbReference>
<dbReference type="FunFam" id="3.30.70.330:FF:000001">
    <property type="entry name" value="50S ribosomal protein L23"/>
    <property type="match status" value="1"/>
</dbReference>
<dbReference type="Gene3D" id="3.30.70.330">
    <property type="match status" value="1"/>
</dbReference>
<dbReference type="HAMAP" id="MF_01369_B">
    <property type="entry name" value="Ribosomal_uL23_B"/>
    <property type="match status" value="1"/>
</dbReference>
<dbReference type="InterPro" id="IPR012677">
    <property type="entry name" value="Nucleotide-bd_a/b_plait_sf"/>
</dbReference>
<dbReference type="InterPro" id="IPR013025">
    <property type="entry name" value="Ribosomal_uL23-like"/>
</dbReference>
<dbReference type="InterPro" id="IPR012678">
    <property type="entry name" value="Ribosomal_uL23/eL15/eS24_sf"/>
</dbReference>
<dbReference type="InterPro" id="IPR001014">
    <property type="entry name" value="Ribosomal_uL23_CS"/>
</dbReference>
<dbReference type="NCBIfam" id="NF004358">
    <property type="entry name" value="PRK05738.1-1"/>
    <property type="match status" value="1"/>
</dbReference>
<dbReference type="NCBIfam" id="NF004359">
    <property type="entry name" value="PRK05738.1-3"/>
    <property type="match status" value="1"/>
</dbReference>
<dbReference type="NCBIfam" id="NF004363">
    <property type="entry name" value="PRK05738.2-4"/>
    <property type="match status" value="1"/>
</dbReference>
<dbReference type="PANTHER" id="PTHR11620">
    <property type="entry name" value="60S RIBOSOMAL PROTEIN L23A"/>
    <property type="match status" value="1"/>
</dbReference>
<dbReference type="Pfam" id="PF00276">
    <property type="entry name" value="Ribosomal_L23"/>
    <property type="match status" value="1"/>
</dbReference>
<dbReference type="SUPFAM" id="SSF54189">
    <property type="entry name" value="Ribosomal proteins S24e, L23 and L15e"/>
    <property type="match status" value="1"/>
</dbReference>
<dbReference type="PROSITE" id="PS00050">
    <property type="entry name" value="RIBOSOMAL_L23"/>
    <property type="match status" value="1"/>
</dbReference>
<feature type="chain" id="PRO_0000129408" description="Large ribosomal subunit protein uL23">
    <location>
        <begin position="1"/>
        <end position="100"/>
    </location>
</feature>
<organism>
    <name type="scientific">Escherichia coli O157:H7</name>
    <dbReference type="NCBI Taxonomy" id="83334"/>
    <lineage>
        <taxon>Bacteria</taxon>
        <taxon>Pseudomonadati</taxon>
        <taxon>Pseudomonadota</taxon>
        <taxon>Gammaproteobacteria</taxon>
        <taxon>Enterobacterales</taxon>
        <taxon>Enterobacteriaceae</taxon>
        <taxon>Escherichia</taxon>
    </lineage>
</organism>